<protein>
    <recommendedName>
        <fullName evidence="1">Phenylalanine--tRNA ligase alpha subunit</fullName>
        <ecNumber evidence="1">6.1.1.20</ecNumber>
    </recommendedName>
    <alternativeName>
        <fullName evidence="1">Phenylalanyl-tRNA synthetase alpha subunit</fullName>
        <shortName evidence="1">PheRS</shortName>
    </alternativeName>
</protein>
<evidence type="ECO:0000255" key="1">
    <source>
        <dbReference type="HAMAP-Rule" id="MF_00281"/>
    </source>
</evidence>
<name>SYFA_TROW8</name>
<feature type="chain" id="PRO_0000126788" description="Phenylalanine--tRNA ligase alpha subunit">
    <location>
        <begin position="1"/>
        <end position="336"/>
    </location>
</feature>
<feature type="binding site" evidence="1">
    <location>
        <position position="259"/>
    </location>
    <ligand>
        <name>Mg(2+)</name>
        <dbReference type="ChEBI" id="CHEBI:18420"/>
        <note>shared with beta subunit</note>
    </ligand>
</feature>
<proteinExistence type="inferred from homology"/>
<accession>Q83HH3</accession>
<dbReference type="EC" id="6.1.1.20" evidence="1"/>
<dbReference type="EMBL" id="BX251412">
    <property type="protein sequence ID" value="CAD67270.1"/>
    <property type="molecule type" value="Genomic_DNA"/>
</dbReference>
<dbReference type="RefSeq" id="WP_011096550.1">
    <property type="nucleotide sequence ID" value="NC_004551.1"/>
</dbReference>
<dbReference type="SMR" id="Q83HH3"/>
<dbReference type="GeneID" id="67388387"/>
<dbReference type="KEGG" id="tws:TW605"/>
<dbReference type="HOGENOM" id="CLU_025086_0_0_11"/>
<dbReference type="GO" id="GO:0005737">
    <property type="term" value="C:cytoplasm"/>
    <property type="evidence" value="ECO:0007669"/>
    <property type="project" value="UniProtKB-SubCell"/>
</dbReference>
<dbReference type="GO" id="GO:0005524">
    <property type="term" value="F:ATP binding"/>
    <property type="evidence" value="ECO:0007669"/>
    <property type="project" value="UniProtKB-UniRule"/>
</dbReference>
<dbReference type="GO" id="GO:0000287">
    <property type="term" value="F:magnesium ion binding"/>
    <property type="evidence" value="ECO:0007669"/>
    <property type="project" value="UniProtKB-UniRule"/>
</dbReference>
<dbReference type="GO" id="GO:0004826">
    <property type="term" value="F:phenylalanine-tRNA ligase activity"/>
    <property type="evidence" value="ECO:0007669"/>
    <property type="project" value="UniProtKB-UniRule"/>
</dbReference>
<dbReference type="GO" id="GO:0000049">
    <property type="term" value="F:tRNA binding"/>
    <property type="evidence" value="ECO:0007669"/>
    <property type="project" value="InterPro"/>
</dbReference>
<dbReference type="GO" id="GO:0006432">
    <property type="term" value="P:phenylalanyl-tRNA aminoacylation"/>
    <property type="evidence" value="ECO:0007669"/>
    <property type="project" value="UniProtKB-UniRule"/>
</dbReference>
<dbReference type="CDD" id="cd00496">
    <property type="entry name" value="PheRS_alpha_core"/>
    <property type="match status" value="1"/>
</dbReference>
<dbReference type="Gene3D" id="3.30.930.10">
    <property type="entry name" value="Bira Bifunctional Protein, Domain 2"/>
    <property type="match status" value="1"/>
</dbReference>
<dbReference type="HAMAP" id="MF_00281">
    <property type="entry name" value="Phe_tRNA_synth_alpha1"/>
    <property type="match status" value="1"/>
</dbReference>
<dbReference type="InterPro" id="IPR006195">
    <property type="entry name" value="aa-tRNA-synth_II"/>
</dbReference>
<dbReference type="InterPro" id="IPR045864">
    <property type="entry name" value="aa-tRNA-synth_II/BPL/LPL"/>
</dbReference>
<dbReference type="InterPro" id="IPR004529">
    <property type="entry name" value="Phe-tRNA-synth_IIc_asu"/>
</dbReference>
<dbReference type="InterPro" id="IPR004188">
    <property type="entry name" value="Phe-tRNA_ligase_II_N"/>
</dbReference>
<dbReference type="InterPro" id="IPR022911">
    <property type="entry name" value="Phe_tRNA_ligase_alpha1_bac"/>
</dbReference>
<dbReference type="InterPro" id="IPR002319">
    <property type="entry name" value="Phenylalanyl-tRNA_Synthase"/>
</dbReference>
<dbReference type="InterPro" id="IPR010978">
    <property type="entry name" value="tRNA-bd_arm"/>
</dbReference>
<dbReference type="NCBIfam" id="TIGR00468">
    <property type="entry name" value="pheS"/>
    <property type="match status" value="1"/>
</dbReference>
<dbReference type="PANTHER" id="PTHR11538:SF41">
    <property type="entry name" value="PHENYLALANINE--TRNA LIGASE, MITOCHONDRIAL"/>
    <property type="match status" value="1"/>
</dbReference>
<dbReference type="PANTHER" id="PTHR11538">
    <property type="entry name" value="PHENYLALANYL-TRNA SYNTHETASE"/>
    <property type="match status" value="1"/>
</dbReference>
<dbReference type="Pfam" id="PF02912">
    <property type="entry name" value="Phe_tRNA-synt_N"/>
    <property type="match status" value="1"/>
</dbReference>
<dbReference type="Pfam" id="PF01409">
    <property type="entry name" value="tRNA-synt_2d"/>
    <property type="match status" value="1"/>
</dbReference>
<dbReference type="SUPFAM" id="SSF55681">
    <property type="entry name" value="Class II aaRS and biotin synthetases"/>
    <property type="match status" value="1"/>
</dbReference>
<dbReference type="SUPFAM" id="SSF46589">
    <property type="entry name" value="tRNA-binding arm"/>
    <property type="match status" value="1"/>
</dbReference>
<dbReference type="PROSITE" id="PS50862">
    <property type="entry name" value="AA_TRNA_LIGASE_II"/>
    <property type="match status" value="1"/>
</dbReference>
<comment type="catalytic activity">
    <reaction evidence="1">
        <text>tRNA(Phe) + L-phenylalanine + ATP = L-phenylalanyl-tRNA(Phe) + AMP + diphosphate + H(+)</text>
        <dbReference type="Rhea" id="RHEA:19413"/>
        <dbReference type="Rhea" id="RHEA-COMP:9668"/>
        <dbReference type="Rhea" id="RHEA-COMP:9699"/>
        <dbReference type="ChEBI" id="CHEBI:15378"/>
        <dbReference type="ChEBI" id="CHEBI:30616"/>
        <dbReference type="ChEBI" id="CHEBI:33019"/>
        <dbReference type="ChEBI" id="CHEBI:58095"/>
        <dbReference type="ChEBI" id="CHEBI:78442"/>
        <dbReference type="ChEBI" id="CHEBI:78531"/>
        <dbReference type="ChEBI" id="CHEBI:456215"/>
        <dbReference type="EC" id="6.1.1.20"/>
    </reaction>
</comment>
<comment type="cofactor">
    <cofactor evidence="1">
        <name>Mg(2+)</name>
        <dbReference type="ChEBI" id="CHEBI:18420"/>
    </cofactor>
    <text evidence="1">Binds 2 magnesium ions per tetramer.</text>
</comment>
<comment type="subunit">
    <text evidence="1">Tetramer of two alpha and two beta subunits.</text>
</comment>
<comment type="subcellular location">
    <subcellularLocation>
        <location evidence="1">Cytoplasm</location>
    </subcellularLocation>
</comment>
<comment type="similarity">
    <text evidence="1">Belongs to the class-II aminoacyl-tRNA synthetase family. Phe-tRNA synthetase alpha subunit type 1 subfamily.</text>
</comment>
<reference key="1">
    <citation type="journal article" date="2003" name="Lancet">
        <title>Sequencing and analysis of the genome of the Whipple's disease bacterium Tropheryma whipplei.</title>
        <authorList>
            <person name="Bentley S.D."/>
            <person name="Maiwald M."/>
            <person name="Murphy L.D."/>
            <person name="Pallen M.J."/>
            <person name="Yeats C.A."/>
            <person name="Dover L.G."/>
            <person name="Norbertczak H.T."/>
            <person name="Besra G.S."/>
            <person name="Quail M.A."/>
            <person name="Harris D.E."/>
            <person name="von Herbay A."/>
            <person name="Goble A."/>
            <person name="Rutter S."/>
            <person name="Squares R."/>
            <person name="Squares S."/>
            <person name="Barrell B.G."/>
            <person name="Parkhill J."/>
            <person name="Relman D.A."/>
        </authorList>
    </citation>
    <scope>NUCLEOTIDE SEQUENCE [LARGE SCALE GENOMIC DNA]</scope>
    <source>
        <strain>TW08/27</strain>
    </source>
</reference>
<gene>
    <name evidence="1" type="primary">pheS</name>
    <name type="ordered locus">TW605</name>
</gene>
<keyword id="KW-0030">Aminoacyl-tRNA synthetase</keyword>
<keyword id="KW-0067">ATP-binding</keyword>
<keyword id="KW-0963">Cytoplasm</keyword>
<keyword id="KW-0436">Ligase</keyword>
<keyword id="KW-0460">Magnesium</keyword>
<keyword id="KW-0479">Metal-binding</keyword>
<keyword id="KW-0547">Nucleotide-binding</keyword>
<keyword id="KW-0648">Protein biosynthesis</keyword>
<sequence>MDEIQDIEGLTRRALQAISRIDTLRDLTKLKNDNLGSTSWLAKYSASIKILSQEKKPIIGKAVSEARRKILEACQDRDLALRLNAQNEQFTRETLDITALPTRIFPGARHPIHVLQDKILDFFLMRGWSVVEGPELESEWLNFDALNIGPFHPAREESDTIFAEPRSASMLLRTHTSPVQLRALVSNPLPLYCVSSGKVFRSDPLDATHTPVFHQLEGLVCDRNITLGHLKGTVEDLARYLFGAEVNLRMRCNYFPFTEPSAEFDISRDGIDWTEWGGCGLVNSKVLSMAGVDTVHYTGFAFGFGLERTLQFIHSLSDMRDIVEGDIRFSQQFGLK</sequence>
<organism>
    <name type="scientific">Tropheryma whipplei (strain TW08/27)</name>
    <name type="common">Whipple's bacillus</name>
    <dbReference type="NCBI Taxonomy" id="218496"/>
    <lineage>
        <taxon>Bacteria</taxon>
        <taxon>Bacillati</taxon>
        <taxon>Actinomycetota</taxon>
        <taxon>Actinomycetes</taxon>
        <taxon>Micrococcales</taxon>
        <taxon>Tropherymataceae</taxon>
        <taxon>Tropheryma</taxon>
    </lineage>
</organism>